<protein>
    <recommendedName>
        <fullName evidence="1">PKHD-type hydroxylase Daci_1172</fullName>
        <ecNumber evidence="1">1.14.11.-</ecNumber>
    </recommendedName>
</protein>
<organism>
    <name type="scientific">Delftia acidovorans (strain DSM 14801 / SPH-1)</name>
    <dbReference type="NCBI Taxonomy" id="398578"/>
    <lineage>
        <taxon>Bacteria</taxon>
        <taxon>Pseudomonadati</taxon>
        <taxon>Pseudomonadota</taxon>
        <taxon>Betaproteobacteria</taxon>
        <taxon>Burkholderiales</taxon>
        <taxon>Comamonadaceae</taxon>
        <taxon>Delftia</taxon>
    </lineage>
</organism>
<dbReference type="EC" id="1.14.11.-" evidence="1"/>
<dbReference type="EMBL" id="CP000884">
    <property type="protein sequence ID" value="ABX33817.1"/>
    <property type="molecule type" value="Genomic_DNA"/>
</dbReference>
<dbReference type="RefSeq" id="WP_012203103.1">
    <property type="nucleotide sequence ID" value="NC_010002.1"/>
</dbReference>
<dbReference type="SMR" id="A9BUB4"/>
<dbReference type="STRING" id="398578.Daci_1172"/>
<dbReference type="GeneID" id="24114517"/>
<dbReference type="KEGG" id="dac:Daci_1172"/>
<dbReference type="eggNOG" id="COG3128">
    <property type="taxonomic scope" value="Bacteria"/>
</dbReference>
<dbReference type="HOGENOM" id="CLU_106663_0_0_4"/>
<dbReference type="Proteomes" id="UP000000784">
    <property type="component" value="Chromosome"/>
</dbReference>
<dbReference type="GO" id="GO:0016706">
    <property type="term" value="F:2-oxoglutarate-dependent dioxygenase activity"/>
    <property type="evidence" value="ECO:0007669"/>
    <property type="project" value="UniProtKB-UniRule"/>
</dbReference>
<dbReference type="GO" id="GO:0005506">
    <property type="term" value="F:iron ion binding"/>
    <property type="evidence" value="ECO:0007669"/>
    <property type="project" value="UniProtKB-UniRule"/>
</dbReference>
<dbReference type="GO" id="GO:0031418">
    <property type="term" value="F:L-ascorbic acid binding"/>
    <property type="evidence" value="ECO:0007669"/>
    <property type="project" value="UniProtKB-KW"/>
</dbReference>
<dbReference type="GO" id="GO:0006974">
    <property type="term" value="P:DNA damage response"/>
    <property type="evidence" value="ECO:0007669"/>
    <property type="project" value="TreeGrafter"/>
</dbReference>
<dbReference type="GO" id="GO:0006879">
    <property type="term" value="P:intracellular iron ion homeostasis"/>
    <property type="evidence" value="ECO:0007669"/>
    <property type="project" value="TreeGrafter"/>
</dbReference>
<dbReference type="Gene3D" id="2.60.120.620">
    <property type="entry name" value="q2cbj1_9rhob like domain"/>
    <property type="match status" value="1"/>
</dbReference>
<dbReference type="Gene3D" id="4.10.860.20">
    <property type="entry name" value="Rabenosyn, Rab binding domain"/>
    <property type="match status" value="1"/>
</dbReference>
<dbReference type="HAMAP" id="MF_00657">
    <property type="entry name" value="Hydroxyl_YbiX"/>
    <property type="match status" value="1"/>
</dbReference>
<dbReference type="InterPro" id="IPR005123">
    <property type="entry name" value="Oxoglu/Fe-dep_dioxygenase_dom"/>
</dbReference>
<dbReference type="InterPro" id="IPR041097">
    <property type="entry name" value="PKHD_C"/>
</dbReference>
<dbReference type="InterPro" id="IPR023550">
    <property type="entry name" value="PKHD_hydroxylase"/>
</dbReference>
<dbReference type="InterPro" id="IPR006620">
    <property type="entry name" value="Pro_4_hyd_alph"/>
</dbReference>
<dbReference type="InterPro" id="IPR044862">
    <property type="entry name" value="Pro_4_hyd_alph_FE2OG_OXY"/>
</dbReference>
<dbReference type="NCBIfam" id="NF003974">
    <property type="entry name" value="PRK05467.1-3"/>
    <property type="match status" value="1"/>
</dbReference>
<dbReference type="NCBIfam" id="NF003975">
    <property type="entry name" value="PRK05467.1-4"/>
    <property type="match status" value="1"/>
</dbReference>
<dbReference type="PANTHER" id="PTHR41536">
    <property type="entry name" value="PKHD-TYPE HYDROXYLASE YBIX"/>
    <property type="match status" value="1"/>
</dbReference>
<dbReference type="PANTHER" id="PTHR41536:SF1">
    <property type="entry name" value="PKHD-TYPE HYDROXYLASE YBIX"/>
    <property type="match status" value="1"/>
</dbReference>
<dbReference type="Pfam" id="PF13640">
    <property type="entry name" value="2OG-FeII_Oxy_3"/>
    <property type="match status" value="1"/>
</dbReference>
<dbReference type="Pfam" id="PF18331">
    <property type="entry name" value="PKHD_C"/>
    <property type="match status" value="1"/>
</dbReference>
<dbReference type="SMART" id="SM00702">
    <property type="entry name" value="P4Hc"/>
    <property type="match status" value="1"/>
</dbReference>
<dbReference type="PROSITE" id="PS51471">
    <property type="entry name" value="FE2OG_OXY"/>
    <property type="match status" value="1"/>
</dbReference>
<keyword id="KW-0223">Dioxygenase</keyword>
<keyword id="KW-0408">Iron</keyword>
<keyword id="KW-0479">Metal-binding</keyword>
<keyword id="KW-0560">Oxidoreductase</keyword>
<keyword id="KW-1185">Reference proteome</keyword>
<keyword id="KW-0847">Vitamin C</keyword>
<name>Y1172_DELAS</name>
<sequence length="226" mass="24756">MMLRIPALLSPDEVRQCRQALEQAPWQDGRATAGPLAAQVKANLQLPLDSQAGQAIGNLILDKLGASALFMSATLPLKVLPPRFNRYEGGGTYGNHIDNAIFTIPGTAIKVRSDVSTTVFFSEPDEYEGGELIVEDTFGHQSVKLAAGDAIVYPGTSLHRVNPVTRGTRYASFFWTHSLVASDEKRRILFDLDQQIQQLTVRHPGDPALSALSGTYHNLLRMWSQA</sequence>
<accession>A9BUB4</accession>
<feature type="chain" id="PRO_0000346478" description="PKHD-type hydroxylase Daci_1172">
    <location>
        <begin position="1"/>
        <end position="226"/>
    </location>
</feature>
<feature type="domain" description="Fe2OG dioxygenase" evidence="1">
    <location>
        <begin position="78"/>
        <end position="178"/>
    </location>
</feature>
<feature type="binding site" evidence="1">
    <location>
        <position position="96"/>
    </location>
    <ligand>
        <name>Fe cation</name>
        <dbReference type="ChEBI" id="CHEBI:24875"/>
    </ligand>
</feature>
<feature type="binding site" evidence="1">
    <location>
        <position position="98"/>
    </location>
    <ligand>
        <name>Fe cation</name>
        <dbReference type="ChEBI" id="CHEBI:24875"/>
    </ligand>
</feature>
<feature type="binding site" evidence="1">
    <location>
        <position position="159"/>
    </location>
    <ligand>
        <name>Fe cation</name>
        <dbReference type="ChEBI" id="CHEBI:24875"/>
    </ligand>
</feature>
<feature type="binding site" evidence="1">
    <location>
        <position position="169"/>
    </location>
    <ligand>
        <name>2-oxoglutarate</name>
        <dbReference type="ChEBI" id="CHEBI:16810"/>
    </ligand>
</feature>
<proteinExistence type="inferred from homology"/>
<comment type="cofactor">
    <cofactor evidence="1">
        <name>Fe(2+)</name>
        <dbReference type="ChEBI" id="CHEBI:29033"/>
    </cofactor>
    <text evidence="1">Binds 1 Fe(2+) ion per subunit.</text>
</comment>
<comment type="cofactor">
    <cofactor evidence="1">
        <name>L-ascorbate</name>
        <dbReference type="ChEBI" id="CHEBI:38290"/>
    </cofactor>
</comment>
<evidence type="ECO:0000255" key="1">
    <source>
        <dbReference type="HAMAP-Rule" id="MF_00657"/>
    </source>
</evidence>
<reference key="1">
    <citation type="submission" date="2007-11" db="EMBL/GenBank/DDBJ databases">
        <title>Complete sequence of Delftia acidovorans DSM 14801 / SPH-1.</title>
        <authorList>
            <person name="Copeland A."/>
            <person name="Lucas S."/>
            <person name="Lapidus A."/>
            <person name="Barry K."/>
            <person name="Glavina del Rio T."/>
            <person name="Dalin E."/>
            <person name="Tice H."/>
            <person name="Pitluck S."/>
            <person name="Lowry S."/>
            <person name="Clum A."/>
            <person name="Schmutz J."/>
            <person name="Larimer F."/>
            <person name="Land M."/>
            <person name="Hauser L."/>
            <person name="Kyrpides N."/>
            <person name="Kim E."/>
            <person name="Schleheck D."/>
            <person name="Richardson P."/>
        </authorList>
    </citation>
    <scope>NUCLEOTIDE SEQUENCE [LARGE SCALE GENOMIC DNA]</scope>
    <source>
        <strain>DSM 14801 / SPH-1</strain>
    </source>
</reference>
<gene>
    <name type="ordered locus">Daci_1172</name>
</gene>